<keyword id="KW-0963">Cytoplasm</keyword>
<keyword id="KW-0378">Hydrolase</keyword>
<keyword id="KW-0479">Metal-binding</keyword>
<keyword id="KW-0533">Nickel</keyword>
<keyword id="KW-1185">Reference proteome</keyword>
<protein>
    <recommendedName>
        <fullName evidence="1">Urease subunit alpha</fullName>
        <ecNumber evidence="1">3.5.1.5</ecNumber>
    </recommendedName>
    <alternativeName>
        <fullName evidence="1">Urea amidohydrolase subunit alpha</fullName>
    </alternativeName>
</protein>
<dbReference type="EC" id="3.5.1.5" evidence="1"/>
<dbReference type="EMBL" id="CP001389">
    <property type="protein sequence ID" value="ACP26257.1"/>
    <property type="molecule type" value="Genomic_DNA"/>
</dbReference>
<dbReference type="RefSeq" id="WP_012709015.1">
    <property type="nucleotide sequence ID" value="NC_012587.1"/>
</dbReference>
<dbReference type="RefSeq" id="YP_002827010.1">
    <property type="nucleotide sequence ID" value="NC_012587.1"/>
</dbReference>
<dbReference type="SMR" id="C3MGI5"/>
<dbReference type="STRING" id="394.NGR_c25000"/>
<dbReference type="KEGG" id="rhi:NGR_c25000"/>
<dbReference type="PATRIC" id="fig|394.7.peg.5321"/>
<dbReference type="eggNOG" id="COG0804">
    <property type="taxonomic scope" value="Bacteria"/>
</dbReference>
<dbReference type="HOGENOM" id="CLU_000980_0_0_5"/>
<dbReference type="OrthoDB" id="9802793at2"/>
<dbReference type="UniPathway" id="UPA00258">
    <property type="reaction ID" value="UER00370"/>
</dbReference>
<dbReference type="Proteomes" id="UP000001054">
    <property type="component" value="Chromosome"/>
</dbReference>
<dbReference type="GO" id="GO:0005737">
    <property type="term" value="C:cytoplasm"/>
    <property type="evidence" value="ECO:0007669"/>
    <property type="project" value="UniProtKB-SubCell"/>
</dbReference>
<dbReference type="GO" id="GO:0016151">
    <property type="term" value="F:nickel cation binding"/>
    <property type="evidence" value="ECO:0007669"/>
    <property type="project" value="UniProtKB-UniRule"/>
</dbReference>
<dbReference type="GO" id="GO:0009039">
    <property type="term" value="F:urease activity"/>
    <property type="evidence" value="ECO:0007669"/>
    <property type="project" value="UniProtKB-UniRule"/>
</dbReference>
<dbReference type="GO" id="GO:0043419">
    <property type="term" value="P:urea catabolic process"/>
    <property type="evidence" value="ECO:0007669"/>
    <property type="project" value="UniProtKB-UniRule"/>
</dbReference>
<dbReference type="CDD" id="cd00375">
    <property type="entry name" value="Urease_alpha"/>
    <property type="match status" value="1"/>
</dbReference>
<dbReference type="Gene3D" id="3.20.20.140">
    <property type="entry name" value="Metal-dependent hydrolases"/>
    <property type="match status" value="1"/>
</dbReference>
<dbReference type="Gene3D" id="2.30.40.10">
    <property type="entry name" value="Urease, subunit C, domain 1"/>
    <property type="match status" value="1"/>
</dbReference>
<dbReference type="HAMAP" id="MF_01953">
    <property type="entry name" value="Urease_alpha"/>
    <property type="match status" value="1"/>
</dbReference>
<dbReference type="InterPro" id="IPR006680">
    <property type="entry name" value="Amidohydro-rel"/>
</dbReference>
<dbReference type="InterPro" id="IPR011059">
    <property type="entry name" value="Metal-dep_hydrolase_composite"/>
</dbReference>
<dbReference type="InterPro" id="IPR032466">
    <property type="entry name" value="Metal_Hydrolase"/>
</dbReference>
<dbReference type="InterPro" id="IPR011612">
    <property type="entry name" value="Urease_alpha_N_dom"/>
</dbReference>
<dbReference type="InterPro" id="IPR050112">
    <property type="entry name" value="Urease_alpha_subunit"/>
</dbReference>
<dbReference type="InterPro" id="IPR017950">
    <property type="entry name" value="Urease_AS"/>
</dbReference>
<dbReference type="InterPro" id="IPR005848">
    <property type="entry name" value="Urease_asu"/>
</dbReference>
<dbReference type="InterPro" id="IPR017951">
    <property type="entry name" value="Urease_asu_c"/>
</dbReference>
<dbReference type="InterPro" id="IPR029754">
    <property type="entry name" value="Urease_Ni-bd"/>
</dbReference>
<dbReference type="NCBIfam" id="NF009685">
    <property type="entry name" value="PRK13206.1"/>
    <property type="match status" value="1"/>
</dbReference>
<dbReference type="NCBIfam" id="NF009686">
    <property type="entry name" value="PRK13207.1"/>
    <property type="match status" value="1"/>
</dbReference>
<dbReference type="NCBIfam" id="TIGR01792">
    <property type="entry name" value="urease_alph"/>
    <property type="match status" value="1"/>
</dbReference>
<dbReference type="PANTHER" id="PTHR43440">
    <property type="entry name" value="UREASE"/>
    <property type="match status" value="1"/>
</dbReference>
<dbReference type="PANTHER" id="PTHR43440:SF1">
    <property type="entry name" value="UREASE"/>
    <property type="match status" value="1"/>
</dbReference>
<dbReference type="Pfam" id="PF01979">
    <property type="entry name" value="Amidohydro_1"/>
    <property type="match status" value="1"/>
</dbReference>
<dbReference type="Pfam" id="PF00449">
    <property type="entry name" value="Urease_alpha"/>
    <property type="match status" value="1"/>
</dbReference>
<dbReference type="PRINTS" id="PR01752">
    <property type="entry name" value="UREASE"/>
</dbReference>
<dbReference type="SUPFAM" id="SSF51338">
    <property type="entry name" value="Composite domain of metallo-dependent hydrolases"/>
    <property type="match status" value="2"/>
</dbReference>
<dbReference type="SUPFAM" id="SSF51556">
    <property type="entry name" value="Metallo-dependent hydrolases"/>
    <property type="match status" value="1"/>
</dbReference>
<dbReference type="PROSITE" id="PS01120">
    <property type="entry name" value="UREASE_1"/>
    <property type="match status" value="1"/>
</dbReference>
<dbReference type="PROSITE" id="PS00145">
    <property type="entry name" value="UREASE_2"/>
    <property type="match status" value="1"/>
</dbReference>
<dbReference type="PROSITE" id="PS51368">
    <property type="entry name" value="UREASE_3"/>
    <property type="match status" value="1"/>
</dbReference>
<reference key="1">
    <citation type="journal article" date="2009" name="Appl. Environ. Microbiol.">
        <title>Rhizobium sp. strain NGR234 possesses a remarkable number of secretion systems.</title>
        <authorList>
            <person name="Schmeisser C."/>
            <person name="Liesegang H."/>
            <person name="Krysciak D."/>
            <person name="Bakkou N."/>
            <person name="Le Quere A."/>
            <person name="Wollherr A."/>
            <person name="Heinemeyer I."/>
            <person name="Morgenstern B."/>
            <person name="Pommerening-Roeser A."/>
            <person name="Flores M."/>
            <person name="Palacios R."/>
            <person name="Brenner S."/>
            <person name="Gottschalk G."/>
            <person name="Schmitz R.A."/>
            <person name="Broughton W.J."/>
            <person name="Perret X."/>
            <person name="Strittmatter A.W."/>
            <person name="Streit W.R."/>
        </authorList>
    </citation>
    <scope>NUCLEOTIDE SEQUENCE [LARGE SCALE GENOMIC DNA]</scope>
    <source>
        <strain>NBRC 101917 / NGR234</strain>
    </source>
</reference>
<name>URE1_SINFN</name>
<organism>
    <name type="scientific">Sinorhizobium fredii (strain NBRC 101917 / NGR234)</name>
    <dbReference type="NCBI Taxonomy" id="394"/>
    <lineage>
        <taxon>Bacteria</taxon>
        <taxon>Pseudomonadati</taxon>
        <taxon>Pseudomonadota</taxon>
        <taxon>Alphaproteobacteria</taxon>
        <taxon>Hyphomicrobiales</taxon>
        <taxon>Rhizobiaceae</taxon>
        <taxon>Sinorhizobium/Ensifer group</taxon>
        <taxon>Sinorhizobium</taxon>
    </lineage>
</organism>
<comment type="catalytic activity">
    <reaction evidence="1">
        <text>urea + 2 H2O + H(+) = hydrogencarbonate + 2 NH4(+)</text>
        <dbReference type="Rhea" id="RHEA:20557"/>
        <dbReference type="ChEBI" id="CHEBI:15377"/>
        <dbReference type="ChEBI" id="CHEBI:15378"/>
        <dbReference type="ChEBI" id="CHEBI:16199"/>
        <dbReference type="ChEBI" id="CHEBI:17544"/>
        <dbReference type="ChEBI" id="CHEBI:28938"/>
        <dbReference type="EC" id="3.5.1.5"/>
    </reaction>
</comment>
<comment type="cofactor">
    <cofactor evidence="1">
        <name>Ni cation</name>
        <dbReference type="ChEBI" id="CHEBI:25516"/>
    </cofactor>
    <text evidence="1">Binds 2 nickel ions per subunit.</text>
</comment>
<comment type="pathway">
    <text evidence="1">Nitrogen metabolism; urea degradation; CO(2) and NH(3) from urea (urease route): step 1/1.</text>
</comment>
<comment type="subunit">
    <text evidence="1">Heterotrimer of UreA (gamma), UreB (beta) and UreC (alpha) subunits. Three heterotrimers associate to form the active enzyme.</text>
</comment>
<comment type="subcellular location">
    <subcellularLocation>
        <location evidence="1">Cytoplasm</location>
    </subcellularLocation>
</comment>
<comment type="PTM">
    <text evidence="1">Carboxylation allows a single lysine to coordinate two nickel ions.</text>
</comment>
<comment type="similarity">
    <text evidence="1">Belongs to the metallo-dependent hydrolases superfamily. Urease alpha subunit family.</text>
</comment>
<sequence length="570" mass="60635">MSYKMSRAAYANMFGPTVGDKVRLADTELFIEVEKDFTTYGEEVKFGGGKVIRDGMGQSQVSREGGAVDTVITNALIVDHWGIVKADIGLKDGRIAAIGKAGNPDTQPGVNIIVGPGTEAIAGEGKIVTAGGMDSHIHFICPQQIEEALMSGLTCMLGGGTGPAHGTLATTCTPGPWHIARMIEAADAFPMNLAFAGKGNASLPGALVEMVLGGATSLKLHEDWGTTPGAIDCCLSVADEYDVQVMIHTDTLNESGFVEDTIAAIKGRTIHAFHTEGAGGGHAPDIIKICGQPNVIPSSTNPTRPYTQNTLAEHLDMLMVCHHLSPSIPEDIAFAESRIRKETIAAEDILHDIGAFSIISSDSQAMGRVGEVAIRTWQTADKMKRQRGRLKEETGDNDNFRVRRYVAKYTINPAIAHGLSHEIGSLEVGKRADLVIWNPAFFGVKPDMVLLGGTIAAAPMGDPNASIPTPQPVHYRPMFGAYGRSRTNSSVTFVSQASLDAGLAGRLGVAKELVAVQNTRGGIGKASMIHNSLTPHIEVDPETYEVRADGVLLTCEPATVLPMAQRYFLF</sequence>
<evidence type="ECO:0000255" key="1">
    <source>
        <dbReference type="HAMAP-Rule" id="MF_01953"/>
    </source>
</evidence>
<gene>
    <name evidence="1" type="primary">ureC</name>
    <name type="ordered locus">NGR_c25000</name>
</gene>
<feature type="chain" id="PRO_1000188891" description="Urease subunit alpha">
    <location>
        <begin position="1"/>
        <end position="570"/>
    </location>
</feature>
<feature type="domain" description="Urease" evidence="1">
    <location>
        <begin position="131"/>
        <end position="570"/>
    </location>
</feature>
<feature type="active site" description="Proton donor" evidence="1">
    <location>
        <position position="322"/>
    </location>
</feature>
<feature type="binding site" evidence="1">
    <location>
        <position position="136"/>
    </location>
    <ligand>
        <name>Ni(2+)</name>
        <dbReference type="ChEBI" id="CHEBI:49786"/>
        <label>1</label>
    </ligand>
</feature>
<feature type="binding site" evidence="1">
    <location>
        <position position="138"/>
    </location>
    <ligand>
        <name>Ni(2+)</name>
        <dbReference type="ChEBI" id="CHEBI:49786"/>
        <label>1</label>
    </ligand>
</feature>
<feature type="binding site" description="via carbamate group" evidence="1">
    <location>
        <position position="219"/>
    </location>
    <ligand>
        <name>Ni(2+)</name>
        <dbReference type="ChEBI" id="CHEBI:49786"/>
        <label>1</label>
    </ligand>
</feature>
<feature type="binding site" description="via carbamate group" evidence="1">
    <location>
        <position position="219"/>
    </location>
    <ligand>
        <name>Ni(2+)</name>
        <dbReference type="ChEBI" id="CHEBI:49786"/>
        <label>2</label>
    </ligand>
</feature>
<feature type="binding site" evidence="1">
    <location>
        <position position="221"/>
    </location>
    <ligand>
        <name>substrate</name>
    </ligand>
</feature>
<feature type="binding site" evidence="1">
    <location>
        <position position="248"/>
    </location>
    <ligand>
        <name>Ni(2+)</name>
        <dbReference type="ChEBI" id="CHEBI:49786"/>
        <label>2</label>
    </ligand>
</feature>
<feature type="binding site" evidence="1">
    <location>
        <position position="274"/>
    </location>
    <ligand>
        <name>Ni(2+)</name>
        <dbReference type="ChEBI" id="CHEBI:49786"/>
        <label>2</label>
    </ligand>
</feature>
<feature type="binding site" evidence="1">
    <location>
        <position position="362"/>
    </location>
    <ligand>
        <name>Ni(2+)</name>
        <dbReference type="ChEBI" id="CHEBI:49786"/>
        <label>1</label>
    </ligand>
</feature>
<feature type="modified residue" description="N6-carboxylysine" evidence="1">
    <location>
        <position position="219"/>
    </location>
</feature>
<proteinExistence type="inferred from homology"/>
<accession>C3MGI5</accession>